<sequence>MNVQIKICGLTDPDRAAECFELGADAVGLVFYPPSPRFVIDDLALEICQALPKSAPKVGVFVNDTYEFIMNKAERCGITMAQLHGHESQELADRLEKAGIGVIKAFFANRSPDFKAMTEYSAQACLVECAGEKLPGGNAKAWAWRTARGISERMPLALAGGLDPENVSQAILDAMPDALDVSSGVEASPGVKDMDKVKRFIQNATQTGIDYQPRKVFS</sequence>
<feature type="chain" id="PRO_1000197099" description="N-(5'-phosphoribosyl)anthranilate isomerase">
    <location>
        <begin position="1"/>
        <end position="218"/>
    </location>
</feature>
<comment type="catalytic activity">
    <reaction evidence="1">
        <text>N-(5-phospho-beta-D-ribosyl)anthranilate = 1-(2-carboxyphenylamino)-1-deoxy-D-ribulose 5-phosphate</text>
        <dbReference type="Rhea" id="RHEA:21540"/>
        <dbReference type="ChEBI" id="CHEBI:18277"/>
        <dbReference type="ChEBI" id="CHEBI:58613"/>
        <dbReference type="EC" id="5.3.1.24"/>
    </reaction>
</comment>
<comment type="pathway">
    <text evidence="1">Amino-acid biosynthesis; L-tryptophan biosynthesis; L-tryptophan from chorismate: step 3/5.</text>
</comment>
<comment type="similarity">
    <text evidence="1">Belongs to the TrpF family.</text>
</comment>
<gene>
    <name evidence="1" type="primary">trpF</name>
    <name type="ordered locus">Dalk_1435</name>
</gene>
<evidence type="ECO:0000255" key="1">
    <source>
        <dbReference type="HAMAP-Rule" id="MF_00135"/>
    </source>
</evidence>
<keyword id="KW-0028">Amino-acid biosynthesis</keyword>
<keyword id="KW-0057">Aromatic amino acid biosynthesis</keyword>
<keyword id="KW-0413">Isomerase</keyword>
<keyword id="KW-1185">Reference proteome</keyword>
<keyword id="KW-0822">Tryptophan biosynthesis</keyword>
<dbReference type="EC" id="5.3.1.24" evidence="1"/>
<dbReference type="EMBL" id="CP001322">
    <property type="protein sequence ID" value="ACL03135.1"/>
    <property type="molecule type" value="Genomic_DNA"/>
</dbReference>
<dbReference type="RefSeq" id="WP_012610570.1">
    <property type="nucleotide sequence ID" value="NC_011768.1"/>
</dbReference>
<dbReference type="SMR" id="B8FA39"/>
<dbReference type="KEGG" id="dal:Dalk_1435"/>
<dbReference type="eggNOG" id="COG0135">
    <property type="taxonomic scope" value="Bacteria"/>
</dbReference>
<dbReference type="HOGENOM" id="CLU_076364_2_0_7"/>
<dbReference type="UniPathway" id="UPA00035">
    <property type="reaction ID" value="UER00042"/>
</dbReference>
<dbReference type="Proteomes" id="UP000000739">
    <property type="component" value="Chromosome"/>
</dbReference>
<dbReference type="GO" id="GO:0004640">
    <property type="term" value="F:phosphoribosylanthranilate isomerase activity"/>
    <property type="evidence" value="ECO:0007669"/>
    <property type="project" value="UniProtKB-UniRule"/>
</dbReference>
<dbReference type="GO" id="GO:0000162">
    <property type="term" value="P:L-tryptophan biosynthetic process"/>
    <property type="evidence" value="ECO:0007669"/>
    <property type="project" value="UniProtKB-UniRule"/>
</dbReference>
<dbReference type="CDD" id="cd00405">
    <property type="entry name" value="PRAI"/>
    <property type="match status" value="1"/>
</dbReference>
<dbReference type="Gene3D" id="3.20.20.70">
    <property type="entry name" value="Aldolase class I"/>
    <property type="match status" value="1"/>
</dbReference>
<dbReference type="HAMAP" id="MF_00135">
    <property type="entry name" value="PRAI"/>
    <property type="match status" value="1"/>
</dbReference>
<dbReference type="InterPro" id="IPR013785">
    <property type="entry name" value="Aldolase_TIM"/>
</dbReference>
<dbReference type="InterPro" id="IPR001240">
    <property type="entry name" value="PRAI_dom"/>
</dbReference>
<dbReference type="InterPro" id="IPR011060">
    <property type="entry name" value="RibuloseP-bd_barrel"/>
</dbReference>
<dbReference type="InterPro" id="IPR044643">
    <property type="entry name" value="TrpF_fam"/>
</dbReference>
<dbReference type="PANTHER" id="PTHR42894">
    <property type="entry name" value="N-(5'-PHOSPHORIBOSYL)ANTHRANILATE ISOMERASE"/>
    <property type="match status" value="1"/>
</dbReference>
<dbReference type="PANTHER" id="PTHR42894:SF1">
    <property type="entry name" value="N-(5'-PHOSPHORIBOSYL)ANTHRANILATE ISOMERASE"/>
    <property type="match status" value="1"/>
</dbReference>
<dbReference type="Pfam" id="PF00697">
    <property type="entry name" value="PRAI"/>
    <property type="match status" value="1"/>
</dbReference>
<dbReference type="SUPFAM" id="SSF51366">
    <property type="entry name" value="Ribulose-phoshate binding barrel"/>
    <property type="match status" value="1"/>
</dbReference>
<proteinExistence type="inferred from homology"/>
<organism>
    <name type="scientific">Desulfatibacillum aliphaticivorans</name>
    <dbReference type="NCBI Taxonomy" id="218208"/>
    <lineage>
        <taxon>Bacteria</taxon>
        <taxon>Pseudomonadati</taxon>
        <taxon>Thermodesulfobacteriota</taxon>
        <taxon>Desulfobacteria</taxon>
        <taxon>Desulfobacterales</taxon>
        <taxon>Desulfatibacillaceae</taxon>
        <taxon>Desulfatibacillum</taxon>
    </lineage>
</organism>
<protein>
    <recommendedName>
        <fullName evidence="1">N-(5'-phosphoribosyl)anthranilate isomerase</fullName>
        <shortName evidence="1">PRAI</shortName>
        <ecNumber evidence="1">5.3.1.24</ecNumber>
    </recommendedName>
</protein>
<reference key="1">
    <citation type="journal article" date="2012" name="Environ. Microbiol.">
        <title>The genome sequence of Desulfatibacillum alkenivorans AK-01: a blueprint for anaerobic alkane oxidation.</title>
        <authorList>
            <person name="Callaghan A.V."/>
            <person name="Morris B.E."/>
            <person name="Pereira I.A."/>
            <person name="McInerney M.J."/>
            <person name="Austin R.N."/>
            <person name="Groves J.T."/>
            <person name="Kukor J.J."/>
            <person name="Suflita J.M."/>
            <person name="Young L.Y."/>
            <person name="Zylstra G.J."/>
            <person name="Wawrik B."/>
        </authorList>
    </citation>
    <scope>NUCLEOTIDE SEQUENCE [LARGE SCALE GENOMIC DNA]</scope>
    <source>
        <strain>AK-01</strain>
    </source>
</reference>
<name>TRPF_DESAL</name>
<accession>B8FA39</accession>